<dbReference type="EMBL" id="MN208317">
    <property type="protein sequence ID" value="QHB21506.1"/>
    <property type="molecule type" value="mRNA"/>
</dbReference>
<dbReference type="SMR" id="A0A6B9KZ40"/>
<dbReference type="GO" id="GO:0015629">
    <property type="term" value="C:actin cytoskeleton"/>
    <property type="evidence" value="ECO:0007669"/>
    <property type="project" value="TreeGrafter"/>
</dbReference>
<dbReference type="GO" id="GO:0005737">
    <property type="term" value="C:cytoplasm"/>
    <property type="evidence" value="ECO:0007669"/>
    <property type="project" value="TreeGrafter"/>
</dbReference>
<dbReference type="GO" id="GO:0005576">
    <property type="term" value="C:extracellular region"/>
    <property type="evidence" value="ECO:0007669"/>
    <property type="project" value="UniProtKB-SubCell"/>
</dbReference>
<dbReference type="GO" id="GO:0051015">
    <property type="term" value="F:actin filament binding"/>
    <property type="evidence" value="ECO:0007669"/>
    <property type="project" value="InterPro"/>
</dbReference>
<dbReference type="GO" id="GO:0005546">
    <property type="term" value="F:phosphatidylinositol-4,5-bisphosphate binding"/>
    <property type="evidence" value="ECO:0007669"/>
    <property type="project" value="TreeGrafter"/>
</dbReference>
<dbReference type="GO" id="GO:0051014">
    <property type="term" value="P:actin filament severing"/>
    <property type="evidence" value="ECO:0007669"/>
    <property type="project" value="TreeGrafter"/>
</dbReference>
<dbReference type="GO" id="GO:0008154">
    <property type="term" value="P:actin polymerization or depolymerization"/>
    <property type="evidence" value="ECO:0007669"/>
    <property type="project" value="TreeGrafter"/>
</dbReference>
<dbReference type="GO" id="GO:0051016">
    <property type="term" value="P:barbed-end actin filament capping"/>
    <property type="evidence" value="ECO:0007669"/>
    <property type="project" value="TreeGrafter"/>
</dbReference>
<dbReference type="CDD" id="cd11290">
    <property type="entry name" value="gelsolin_S1_like"/>
    <property type="match status" value="1"/>
</dbReference>
<dbReference type="CDD" id="cd11289">
    <property type="entry name" value="gelsolin_S2_like"/>
    <property type="match status" value="1"/>
</dbReference>
<dbReference type="CDD" id="cd11292">
    <property type="entry name" value="gelsolin_S3_like"/>
    <property type="match status" value="1"/>
</dbReference>
<dbReference type="FunFam" id="3.40.20.10:FF:000002">
    <property type="entry name" value="Gelsolin"/>
    <property type="match status" value="1"/>
</dbReference>
<dbReference type="Gene3D" id="3.40.20.10">
    <property type="entry name" value="Severin"/>
    <property type="match status" value="3"/>
</dbReference>
<dbReference type="InterPro" id="IPR029006">
    <property type="entry name" value="ADF-H/Gelsolin-like_dom_sf"/>
</dbReference>
<dbReference type="InterPro" id="IPR007123">
    <property type="entry name" value="Gelsolin-like_dom"/>
</dbReference>
<dbReference type="InterPro" id="IPR007122">
    <property type="entry name" value="Villin/Gelsolin"/>
</dbReference>
<dbReference type="PANTHER" id="PTHR11977:SF123">
    <property type="entry name" value="GELSOLIN"/>
    <property type="match status" value="1"/>
</dbReference>
<dbReference type="PANTHER" id="PTHR11977">
    <property type="entry name" value="VILLIN"/>
    <property type="match status" value="1"/>
</dbReference>
<dbReference type="Pfam" id="PF00626">
    <property type="entry name" value="Gelsolin"/>
    <property type="match status" value="3"/>
</dbReference>
<dbReference type="PRINTS" id="PR00597">
    <property type="entry name" value="GELSOLIN"/>
</dbReference>
<dbReference type="SMART" id="SM00262">
    <property type="entry name" value="GEL"/>
    <property type="match status" value="3"/>
</dbReference>
<dbReference type="SUPFAM" id="SSF55753">
    <property type="entry name" value="Actin depolymerizing proteins"/>
    <property type="match status" value="3"/>
</dbReference>
<proteinExistence type="evidence at protein level"/>
<comment type="subcellular location">
    <subcellularLocation>
        <location evidence="2">Secreted</location>
    </subcellularLocation>
</comment>
<comment type="tissue specificity">
    <text evidence="5">Expressed by the venom gland (posterior main gland) (at protein level).</text>
</comment>
<reference key="1">
    <citation type="journal article" date="2019" name="Toxins">
        <title>Missiles of mass disruption: composition and glandular origin of venom used as a projectile defensive weapon by the assassin bug Platymeris rhadamanthus.</title>
        <authorList>
            <person name="Walker A.A."/>
            <person name="Robinson S.D."/>
            <person name="Undheim E.A.B."/>
            <person name="Jin J."/>
            <person name="Han X."/>
            <person name="Fry B.G."/>
            <person name="Vetter I."/>
            <person name="King G.F."/>
        </authorList>
    </citation>
    <scope>NUCLEOTIDE SEQUENCE [MRNA]</scope>
    <scope>IDENTIFICATION BY MASS SPECTROMETRY</scope>
    <scope>SUBCELLULAR LOCATION</scope>
    <scope>TISSUE SPECIFICITY</scope>
    <source>
        <tissue>Venom</tissue>
        <tissue>Venom gland</tissue>
    </source>
</reference>
<organism>
    <name type="scientific">Platymeris rhadamanthus</name>
    <name type="common">Red spot assassin bug</name>
    <dbReference type="NCBI Taxonomy" id="1134088"/>
    <lineage>
        <taxon>Eukaryota</taxon>
        <taxon>Metazoa</taxon>
        <taxon>Ecdysozoa</taxon>
        <taxon>Arthropoda</taxon>
        <taxon>Hexapoda</taxon>
        <taxon>Insecta</taxon>
        <taxon>Pterygota</taxon>
        <taxon>Neoptera</taxon>
        <taxon>Paraneoptera</taxon>
        <taxon>Hemiptera</taxon>
        <taxon>Heteroptera</taxon>
        <taxon>Panheteroptera</taxon>
        <taxon>Cimicomorpha</taxon>
        <taxon>Reduviidae</taxon>
        <taxon>Platymeris</taxon>
    </lineage>
</organism>
<keyword id="KW-0677">Repeat</keyword>
<keyword id="KW-0964">Secreted</keyword>
<keyword id="KW-0732">Signal</keyword>
<name>GELS1_PLARH</name>
<accession>A0A6B9KZ40</accession>
<feature type="signal peptide" evidence="1">
    <location>
        <begin position="1"/>
        <end position="26"/>
    </location>
</feature>
<feature type="chain" id="PRO_5025615264" description="Actin depolymerising venom protein gelsolin 1" evidence="4">
    <location>
        <begin position="27"/>
        <end position="377"/>
    </location>
</feature>
<feature type="repeat" description="Gelsolin-like 1" evidence="1">
    <location>
        <begin position="50"/>
        <end position="133"/>
    </location>
</feature>
<feature type="repeat" description="Gelsolin-like 2" evidence="1">
    <location>
        <begin position="174"/>
        <end position="243"/>
    </location>
</feature>
<feature type="repeat" description="Gelsolin-like 3" evidence="1">
    <location>
        <begin position="298"/>
        <end position="368"/>
    </location>
</feature>
<sequence length="377" mass="42122">MFRQMKLGSLATKLLLACFLVTCTSGLDIHPNLIGAGQKEGIEIWRIETFVPVPVPKSEYGKFHEGDSYIVLSTKEDKSKKGIFTWDIYYWLGKSTTQDESGTAAVLTVELDDALGKTPVQHREIQGQESEQFVKLFPGGVKYLPGGIDSGFKHTDTNAPGQKKLYQVKGAKYIRVRQVELSAKSLNNGDCFILDTGSEVYVWVGKNSQLPERLKATKAANQIKELDHRGRGKVFIVDASSTSREVKEFFTKLGSGSPSEVANTSEDDQEYEKKQDAMVTLYKVSDASGKLVTEKLSEKPLKQSMLKSEDCFVLDTVTSGVFVWIGRNSSIQEKIEAFKKGLAFLKDNKHPTWTQMQRIVDGGEPTAFKEYFLSWKN</sequence>
<protein>
    <recommendedName>
        <fullName evidence="3">Actin depolymerising venom protein gelsolin 1</fullName>
    </recommendedName>
</protein>
<evidence type="ECO:0000255" key="1"/>
<evidence type="ECO:0000269" key="2">
    <source>
    </source>
</evidence>
<evidence type="ECO:0000303" key="3">
    <source>
    </source>
</evidence>
<evidence type="ECO:0000305" key="4"/>
<evidence type="ECO:0000305" key="5">
    <source>
    </source>
</evidence>